<proteinExistence type="evidence at transcript level"/>
<accession>Q865X0</accession>
<dbReference type="EMBL" id="AB107653">
    <property type="protein sequence ID" value="BAC75390.1"/>
    <property type="molecule type" value="mRNA"/>
</dbReference>
<dbReference type="SMR" id="Q865X0"/>
<dbReference type="GlyCosmos" id="Q865X0">
    <property type="glycosylation" value="2 sites, No reported glycans"/>
</dbReference>
<dbReference type="GO" id="GO:0005615">
    <property type="term" value="C:extracellular space"/>
    <property type="evidence" value="ECO:0007669"/>
    <property type="project" value="UniProtKB-KW"/>
</dbReference>
<dbReference type="GO" id="GO:0005125">
    <property type="term" value="F:cytokine activity"/>
    <property type="evidence" value="ECO:0007669"/>
    <property type="project" value="UniProtKB-KW"/>
</dbReference>
<dbReference type="GO" id="GO:0008083">
    <property type="term" value="F:growth factor activity"/>
    <property type="evidence" value="ECO:0007669"/>
    <property type="project" value="UniProtKB-KW"/>
</dbReference>
<dbReference type="GO" id="GO:0005143">
    <property type="term" value="F:interleukin-12 receptor binding"/>
    <property type="evidence" value="ECO:0007669"/>
    <property type="project" value="InterPro"/>
</dbReference>
<dbReference type="GO" id="GO:0006955">
    <property type="term" value="P:immune response"/>
    <property type="evidence" value="ECO:0007669"/>
    <property type="project" value="InterPro"/>
</dbReference>
<dbReference type="FunFam" id="1.20.1250.10:FF:000020">
    <property type="entry name" value="Interleukin-12 subunit alpha"/>
    <property type="match status" value="1"/>
</dbReference>
<dbReference type="Gene3D" id="1.20.1250.10">
    <property type="match status" value="1"/>
</dbReference>
<dbReference type="InterPro" id="IPR009079">
    <property type="entry name" value="4_helix_cytokine-like_core"/>
</dbReference>
<dbReference type="InterPro" id="IPR050676">
    <property type="entry name" value="IL-12"/>
</dbReference>
<dbReference type="InterPro" id="IPR004281">
    <property type="entry name" value="IL-12_alpha"/>
</dbReference>
<dbReference type="PANTHER" id="PTHR48485:SF1">
    <property type="entry name" value="INTERLEUKIN-12 SUBUNIT ALPHA"/>
    <property type="match status" value="1"/>
</dbReference>
<dbReference type="PANTHER" id="PTHR48485">
    <property type="entry name" value="INTERLEUKIN-12 SUBUNIT BETA-RELATED"/>
    <property type="match status" value="1"/>
</dbReference>
<dbReference type="Pfam" id="PF03039">
    <property type="entry name" value="IL12"/>
    <property type="match status" value="1"/>
</dbReference>
<dbReference type="SUPFAM" id="SSF47266">
    <property type="entry name" value="4-helical cytokines"/>
    <property type="match status" value="1"/>
</dbReference>
<protein>
    <recommendedName>
        <fullName>Interleukin-12 subunit alpha</fullName>
        <shortName>IL-12A</shortName>
    </recommendedName>
    <alternativeName>
        <fullName>Cytotoxic lymphocyte maturation factor 35 kDa subunit</fullName>
        <shortName>CLMF p35</shortName>
    </alternativeName>
    <alternativeName>
        <fullName>IL-12 subunit p35</fullName>
    </alternativeName>
</protein>
<organism>
    <name type="scientific">Lama glama</name>
    <name type="common">Llama</name>
    <dbReference type="NCBI Taxonomy" id="9844"/>
    <lineage>
        <taxon>Eukaryota</taxon>
        <taxon>Metazoa</taxon>
        <taxon>Chordata</taxon>
        <taxon>Craniata</taxon>
        <taxon>Vertebrata</taxon>
        <taxon>Euteleostomi</taxon>
        <taxon>Mammalia</taxon>
        <taxon>Eutheria</taxon>
        <taxon>Laurasiatheria</taxon>
        <taxon>Artiodactyla</taxon>
        <taxon>Tylopoda</taxon>
        <taxon>Camelidae</taxon>
        <taxon>Lama</taxon>
    </lineage>
</organism>
<sequence length="222" mass="24912">MCPLRSLFLMATLVFLNHLDHLSLARSLPTTTAGPGMFQCLSHSQNLLRAVSDTLQKARQTLEFYSCTSEEIDHEDITKDKTSTVEACLPLELATNESCLASRETSLITHGSCLASGKTSFMTTLCLSSIYEDLKMYHMEFQAMNAKLLMDPKRQIFLDQNMLVAIAELMQALNVSGETVPQKPSLEEPDFYKTKVKLCILLHAFRIRAVTIDRMMSYLSSS</sequence>
<gene>
    <name type="primary">IL12A</name>
</gene>
<keyword id="KW-0202">Cytokine</keyword>
<keyword id="KW-1015">Disulfide bond</keyword>
<keyword id="KW-0325">Glycoprotein</keyword>
<keyword id="KW-0339">Growth factor</keyword>
<keyword id="KW-0964">Secreted</keyword>
<keyword id="KW-0732">Signal</keyword>
<comment type="function">
    <text evidence="2 3">Heterodimerizes with IL12B to form the IL-12 cytokine or with EBI3/IL27B to form the IL-35 cytokine. IL-12 is primarily produced by professional antigen-presenting cells (APCs) such as B-cells and dendritic cells (DCs) as well as macrophages and granulocytes and regulates T-cell and natural killer-cell responses, induces the production of interferon-gamma (IFN-gamma), favors the differentiation of T-helper 1 (Th1) cells and is an important link between innate resistance and adaptive immunity. Mechanistically, exerts its biological effects through a receptor composed of IL12R1 and IL12R2 subunits. Binding to the receptor results in the rapid tyrosine phosphorylation of a number of cellular substrates including the JAK family kinases TYK2 and JAK2. In turn, recruited STAT4 gets phosphorylated and translocates to the nucleus where it regulates cytokine/growth factor responsive genes (By similarity). As part of IL-35, plays essential roles in maintaining the immune homeostasis of the liver microenvironment and also functions as an immune-suppressive cytokine (By similarity). Mediates biological events through unconventional receptors composed of IL12RB2 and gp130/IL6ST heterodimers or homodimers. Signaling requires the transcription factors STAT1 and STAT4, which form a unique heterodimer that binds to distinct DNA sites (By similarity).</text>
</comment>
<comment type="subunit">
    <text evidence="2 3">Heterodimer with IL12B; disulfide-linked. This heterodimer is known as interleukin IL-12. Heterodimer with EBI3/IL27B; not disulfide-linked. This heterodimer is known as interleukin IL-35. Interacts with NBR1; this interaction promotes IL-12 secretion (By similarity).</text>
</comment>
<comment type="subcellular location">
    <subcellularLocation>
        <location evidence="2">Secreted</location>
    </subcellularLocation>
</comment>
<comment type="similarity">
    <text evidence="5">Belongs to the IL-6 superfamily.</text>
</comment>
<evidence type="ECO:0000250" key="1"/>
<evidence type="ECO:0000250" key="2">
    <source>
        <dbReference type="UniProtKB" id="P29459"/>
    </source>
</evidence>
<evidence type="ECO:0000250" key="3">
    <source>
        <dbReference type="UniProtKB" id="P43431"/>
    </source>
</evidence>
<evidence type="ECO:0000255" key="4"/>
<evidence type="ECO:0000305" key="5"/>
<name>IL12A_LAMGL</name>
<reference key="1">
    <citation type="journal article" date="2004" name="Vet. Immunol. Immunopathol.">
        <title>Cloning and sequence analysis of llama cytokines related to cell-mediated immunity.</title>
        <authorList>
            <person name="Odbileg R."/>
            <person name="Lee S.-I."/>
            <person name="Yoshida R."/>
            <person name="Chang K.-S."/>
            <person name="Ohashi K."/>
            <person name="Sugimoto C."/>
            <person name="Onuma M."/>
        </authorList>
    </citation>
    <scope>NUCLEOTIDE SEQUENCE [MRNA]</scope>
</reference>
<feature type="signal peptide" evidence="4">
    <location>
        <begin position="1"/>
        <end position="25"/>
    </location>
</feature>
<feature type="chain" id="PRO_0000015605" description="Interleukin-12 subunit alpha">
    <location>
        <begin position="26"/>
        <end position="222"/>
    </location>
</feature>
<feature type="glycosylation site" description="N-linked (GlcNAc...) asparagine" evidence="4">
    <location>
        <position position="96"/>
    </location>
</feature>
<feature type="glycosylation site" description="N-linked (GlcNAc...) asparagine" evidence="4">
    <location>
        <position position="174"/>
    </location>
</feature>
<feature type="disulfide bond" evidence="2">
    <location>
        <begin position="40"/>
        <end position="113"/>
    </location>
</feature>
<feature type="disulfide bond" evidence="1">
    <location>
        <begin position="67"/>
        <end position="199"/>
    </location>
</feature>
<feature type="disulfide bond" evidence="1">
    <location>
        <begin position="88"/>
        <end position="126"/>
    </location>
</feature>
<feature type="disulfide bond" description="Interchain (with C-201 in IL12B)" evidence="1">
    <location>
        <position position="99"/>
    </location>
</feature>